<dbReference type="EC" id="6.1.1.4" evidence="1"/>
<dbReference type="EMBL" id="CP000682">
    <property type="protein sequence ID" value="ABP94748.1"/>
    <property type="molecule type" value="Genomic_DNA"/>
</dbReference>
<dbReference type="RefSeq" id="WP_012020536.1">
    <property type="nucleotide sequence ID" value="NC_009440.1"/>
</dbReference>
<dbReference type="SMR" id="A4YE96"/>
<dbReference type="STRING" id="399549.Msed_0573"/>
<dbReference type="GeneID" id="91755023"/>
<dbReference type="KEGG" id="mse:Msed_0573"/>
<dbReference type="eggNOG" id="arCOG00809">
    <property type="taxonomic scope" value="Archaea"/>
</dbReference>
<dbReference type="HOGENOM" id="CLU_004174_0_0_2"/>
<dbReference type="Proteomes" id="UP000000242">
    <property type="component" value="Chromosome"/>
</dbReference>
<dbReference type="GO" id="GO:0005737">
    <property type="term" value="C:cytoplasm"/>
    <property type="evidence" value="ECO:0007669"/>
    <property type="project" value="UniProtKB-SubCell"/>
</dbReference>
<dbReference type="GO" id="GO:0002161">
    <property type="term" value="F:aminoacyl-tRNA deacylase activity"/>
    <property type="evidence" value="ECO:0007669"/>
    <property type="project" value="InterPro"/>
</dbReference>
<dbReference type="GO" id="GO:0005524">
    <property type="term" value="F:ATP binding"/>
    <property type="evidence" value="ECO:0007669"/>
    <property type="project" value="UniProtKB-UniRule"/>
</dbReference>
<dbReference type="GO" id="GO:0004823">
    <property type="term" value="F:leucine-tRNA ligase activity"/>
    <property type="evidence" value="ECO:0007669"/>
    <property type="project" value="UniProtKB-UniRule"/>
</dbReference>
<dbReference type="GO" id="GO:0006429">
    <property type="term" value="P:leucyl-tRNA aminoacylation"/>
    <property type="evidence" value="ECO:0007669"/>
    <property type="project" value="UniProtKB-UniRule"/>
</dbReference>
<dbReference type="CDD" id="cd07959">
    <property type="entry name" value="Anticodon_Ia_Leu_AEc"/>
    <property type="match status" value="1"/>
</dbReference>
<dbReference type="Gene3D" id="3.30.2320.20">
    <property type="entry name" value="Class I aminoacyl-tRNA synthetases (RS)"/>
    <property type="match status" value="1"/>
</dbReference>
<dbReference type="Gene3D" id="3.40.50.620">
    <property type="entry name" value="HUPs"/>
    <property type="match status" value="1"/>
</dbReference>
<dbReference type="Gene3D" id="1.10.730.10">
    <property type="entry name" value="Isoleucyl-tRNA Synthetase, Domain 1"/>
    <property type="match status" value="1"/>
</dbReference>
<dbReference type="Gene3D" id="1.10.10.720">
    <property type="entry name" value="leucyl-tRNA synthetase"/>
    <property type="match status" value="1"/>
</dbReference>
<dbReference type="Gene3D" id="3.90.740.10">
    <property type="entry name" value="Valyl/Leucyl/Isoleucyl-tRNA synthetase, editing domain"/>
    <property type="match status" value="1"/>
</dbReference>
<dbReference type="HAMAP" id="MF_00049_A">
    <property type="entry name" value="Leu_tRNA_synth_A"/>
    <property type="match status" value="1"/>
</dbReference>
<dbReference type="InterPro" id="IPR002300">
    <property type="entry name" value="aa-tRNA-synth_Ia"/>
</dbReference>
<dbReference type="InterPro" id="IPR020791">
    <property type="entry name" value="Leu-tRNA-lgase_arc"/>
</dbReference>
<dbReference type="InterPro" id="IPR004493">
    <property type="entry name" value="Leu-tRNA-synth_Ia_arc/euk"/>
</dbReference>
<dbReference type="InterPro" id="IPR013155">
    <property type="entry name" value="M/V/L/I-tRNA-synth_anticd-bd"/>
</dbReference>
<dbReference type="InterPro" id="IPR014729">
    <property type="entry name" value="Rossmann-like_a/b/a_fold"/>
</dbReference>
<dbReference type="InterPro" id="IPR009080">
    <property type="entry name" value="tRNAsynth_Ia_anticodon-bd"/>
</dbReference>
<dbReference type="InterPro" id="IPR009008">
    <property type="entry name" value="Val/Leu/Ile-tRNA-synth_edit"/>
</dbReference>
<dbReference type="NCBIfam" id="TIGR00395">
    <property type="entry name" value="leuS_arch"/>
    <property type="match status" value="1"/>
</dbReference>
<dbReference type="NCBIfam" id="NF008957">
    <property type="entry name" value="PRK12300.1"/>
    <property type="match status" value="1"/>
</dbReference>
<dbReference type="PANTHER" id="PTHR45794:SF1">
    <property type="entry name" value="LEUCINE--TRNA LIGASE, CYTOPLASMIC"/>
    <property type="match status" value="1"/>
</dbReference>
<dbReference type="PANTHER" id="PTHR45794">
    <property type="entry name" value="LEUCYL-TRNA SYNTHETASE"/>
    <property type="match status" value="1"/>
</dbReference>
<dbReference type="Pfam" id="PF08264">
    <property type="entry name" value="Anticodon_1"/>
    <property type="match status" value="1"/>
</dbReference>
<dbReference type="Pfam" id="PF00133">
    <property type="entry name" value="tRNA-synt_1"/>
    <property type="match status" value="1"/>
</dbReference>
<dbReference type="SUPFAM" id="SSF47323">
    <property type="entry name" value="Anticodon-binding domain of a subclass of class I aminoacyl-tRNA synthetases"/>
    <property type="match status" value="1"/>
</dbReference>
<dbReference type="SUPFAM" id="SSF52374">
    <property type="entry name" value="Nucleotidylyl transferase"/>
    <property type="match status" value="1"/>
</dbReference>
<dbReference type="SUPFAM" id="SSF50677">
    <property type="entry name" value="ValRS/IleRS/LeuRS editing domain"/>
    <property type="match status" value="1"/>
</dbReference>
<sequence length="938" mass="107432">MDSAFFNEVAKKWQEKWENNKVFEANPSNSEKYFITVAFPYTNSPLHIGHGRTYITADIVARYQRMIGKNVLFPFAFQFTGTPILSISESIKRGDSDIISDFINLYKISPEKVREFEDPLKLAEYFKEDMKRMAKALGLSVDWRREFTTIDPRFGQFIKWQFRKLKEKGFITTATDAVGYCPNDNFPVGMHDTKGDVEPEVQEMDVIEFEGNDVVFPTATSRPETVFGANAVLINPEATYVLIRGSNWVLSKEAFRKLSYQRELVPEREVQGKDLIGLTVKNPISGKDVKVYGSKFVDAKMGTGSVMAVPAHEPLHYLGLSEVLSEVEVIPVISTEGYGDFPGPEVLALAGTKNPAELKDYIDTLYREEYYKGVMREDIVDLVPDYMRSIVKDRIAGKRVPEARRETVELLRSLGKHDLIYEISNGPIYCRCGAEIVVKVIRDQWYITYDNPLWKSWTMKALDRISIVPEEARRDMAKAIFSMKRRACSRSRGLGVKLPWDESQIIDSLSDSTIYTGFYTVAHKLSHDPSKLNDQFWDFVLLGNGDASEVSKVTGISVEELKDLRNEFSYWYPLDSRHSGRDLVQNHLPFLIYNHLAIFGESLLPRQIVINGFVRVGGKKMSKSFRNIYPLYKAVEEYGVDPVRLALTISSELLEDTDFDVNTVKAVTDQLRRMYDLAVNLSKLRENESTGLPEKWLLSIIHYKVKEVSDLMNSLDLRKAFNIILYEYYEILRDYLSMVSNPNTSVLRKAIEIWARLISPGAPHIAEEIWHIFNEGFVSLTRYPVPEELEVDGQAVIQLEYIRHLINQVKEISSMANKQPEKLIIYVSNSDELGILRAVLRGLKERKNLRELSSITGQREEYLRSLVERVQSLPPILRELIVTYPLDEFKTITDNLNFLVRRLDVDEIQVYRSDEANAPDIKGKKSNALPLLPGIVII</sequence>
<protein>
    <recommendedName>
        <fullName evidence="1">Leucine--tRNA ligase 1</fullName>
        <ecNumber evidence="1">6.1.1.4</ecNumber>
    </recommendedName>
    <alternativeName>
        <fullName evidence="1">Leucyl-tRNA synthetase 1</fullName>
        <shortName evidence="1">LeuRS 1</shortName>
    </alternativeName>
</protein>
<keyword id="KW-0030">Aminoacyl-tRNA synthetase</keyword>
<keyword id="KW-0067">ATP-binding</keyword>
<keyword id="KW-0963">Cytoplasm</keyword>
<keyword id="KW-0436">Ligase</keyword>
<keyword id="KW-0547">Nucleotide-binding</keyword>
<keyword id="KW-0648">Protein biosynthesis</keyword>
<keyword id="KW-1185">Reference proteome</keyword>
<evidence type="ECO:0000255" key="1">
    <source>
        <dbReference type="HAMAP-Rule" id="MF_00049"/>
    </source>
</evidence>
<accession>A4YE96</accession>
<feature type="chain" id="PRO_0000334841" description="Leucine--tRNA ligase 1">
    <location>
        <begin position="1"/>
        <end position="938"/>
    </location>
</feature>
<feature type="short sequence motif" description="'HIGH' region">
    <location>
        <begin position="40"/>
        <end position="50"/>
    </location>
</feature>
<feature type="short sequence motif" description="'KMSKS' region">
    <location>
        <begin position="620"/>
        <end position="624"/>
    </location>
</feature>
<feature type="binding site" evidence="1">
    <location>
        <position position="623"/>
    </location>
    <ligand>
        <name>ATP</name>
        <dbReference type="ChEBI" id="CHEBI:30616"/>
    </ligand>
</feature>
<proteinExistence type="inferred from homology"/>
<gene>
    <name evidence="1" type="primary">leuS1</name>
    <name type="ordered locus">Msed_0573</name>
</gene>
<organism>
    <name type="scientific">Metallosphaera sedula (strain ATCC 51363 / DSM 5348 / JCM 9185 / NBRC 15509 / TH2)</name>
    <dbReference type="NCBI Taxonomy" id="399549"/>
    <lineage>
        <taxon>Archaea</taxon>
        <taxon>Thermoproteota</taxon>
        <taxon>Thermoprotei</taxon>
        <taxon>Sulfolobales</taxon>
        <taxon>Sulfolobaceae</taxon>
        <taxon>Metallosphaera</taxon>
    </lineage>
</organism>
<reference key="1">
    <citation type="journal article" date="2008" name="Appl. Environ. Microbiol.">
        <title>The genome sequence of the metal-mobilizing, extremely thermoacidophilic archaeon Metallosphaera sedula provides insights into bioleaching-associated metabolism.</title>
        <authorList>
            <person name="Auernik K.S."/>
            <person name="Maezato Y."/>
            <person name="Blum P.H."/>
            <person name="Kelly R.M."/>
        </authorList>
    </citation>
    <scope>NUCLEOTIDE SEQUENCE [LARGE SCALE GENOMIC DNA]</scope>
    <source>
        <strain>ATCC 51363 / DSM 5348 / JCM 9185 / NBRC 15509 / TH2</strain>
    </source>
</reference>
<name>SYL1_METS5</name>
<comment type="catalytic activity">
    <reaction evidence="1">
        <text>tRNA(Leu) + L-leucine + ATP = L-leucyl-tRNA(Leu) + AMP + diphosphate</text>
        <dbReference type="Rhea" id="RHEA:11688"/>
        <dbReference type="Rhea" id="RHEA-COMP:9613"/>
        <dbReference type="Rhea" id="RHEA-COMP:9622"/>
        <dbReference type="ChEBI" id="CHEBI:30616"/>
        <dbReference type="ChEBI" id="CHEBI:33019"/>
        <dbReference type="ChEBI" id="CHEBI:57427"/>
        <dbReference type="ChEBI" id="CHEBI:78442"/>
        <dbReference type="ChEBI" id="CHEBI:78494"/>
        <dbReference type="ChEBI" id="CHEBI:456215"/>
        <dbReference type="EC" id="6.1.1.4"/>
    </reaction>
</comment>
<comment type="subcellular location">
    <subcellularLocation>
        <location evidence="1">Cytoplasm</location>
    </subcellularLocation>
</comment>
<comment type="similarity">
    <text evidence="1">Belongs to the class-I aminoacyl-tRNA synthetase family.</text>
</comment>